<feature type="chain" id="PRO_0000101026" description="Threonine--tRNA ligase">
    <location>
        <begin position="1"/>
        <end position="638"/>
    </location>
</feature>
<feature type="domain" description="TGS" evidence="2">
    <location>
        <begin position="1"/>
        <end position="61"/>
    </location>
</feature>
<feature type="region of interest" description="Catalytic" evidence="1">
    <location>
        <begin position="242"/>
        <end position="533"/>
    </location>
</feature>
<feature type="binding site" evidence="1">
    <location>
        <position position="333"/>
    </location>
    <ligand>
        <name>Zn(2+)</name>
        <dbReference type="ChEBI" id="CHEBI:29105"/>
    </ligand>
</feature>
<feature type="binding site" evidence="1">
    <location>
        <position position="384"/>
    </location>
    <ligand>
        <name>Zn(2+)</name>
        <dbReference type="ChEBI" id="CHEBI:29105"/>
    </ligand>
</feature>
<feature type="binding site" evidence="1">
    <location>
        <position position="510"/>
    </location>
    <ligand>
        <name>Zn(2+)</name>
        <dbReference type="ChEBI" id="CHEBI:29105"/>
    </ligand>
</feature>
<name>SYT_PROMP</name>
<gene>
    <name evidence="1" type="primary">thrS</name>
    <name type="ordered locus">PMM0597</name>
</gene>
<evidence type="ECO:0000255" key="1">
    <source>
        <dbReference type="HAMAP-Rule" id="MF_00184"/>
    </source>
</evidence>
<evidence type="ECO:0000255" key="2">
    <source>
        <dbReference type="PROSITE-ProRule" id="PRU01228"/>
    </source>
</evidence>
<keyword id="KW-0030">Aminoacyl-tRNA synthetase</keyword>
<keyword id="KW-0067">ATP-binding</keyword>
<keyword id="KW-0963">Cytoplasm</keyword>
<keyword id="KW-0436">Ligase</keyword>
<keyword id="KW-0479">Metal-binding</keyword>
<keyword id="KW-0547">Nucleotide-binding</keyword>
<keyword id="KW-0648">Protein biosynthesis</keyword>
<keyword id="KW-0694">RNA-binding</keyword>
<keyword id="KW-0820">tRNA-binding</keyword>
<keyword id="KW-0862">Zinc</keyword>
<protein>
    <recommendedName>
        <fullName evidence="1">Threonine--tRNA ligase</fullName>
        <ecNumber evidence="1">6.1.1.3</ecNumber>
    </recommendedName>
    <alternativeName>
        <fullName evidence="1">Threonyl-tRNA synthetase</fullName>
        <shortName evidence="1">ThrRS</shortName>
    </alternativeName>
</protein>
<organism>
    <name type="scientific">Prochlorococcus marinus subsp. pastoris (strain CCMP1986 / NIES-2087 / MED4)</name>
    <dbReference type="NCBI Taxonomy" id="59919"/>
    <lineage>
        <taxon>Bacteria</taxon>
        <taxon>Bacillati</taxon>
        <taxon>Cyanobacteriota</taxon>
        <taxon>Cyanophyceae</taxon>
        <taxon>Synechococcales</taxon>
        <taxon>Prochlorococcaceae</taxon>
        <taxon>Prochlorococcus</taxon>
    </lineage>
</organism>
<sequence>MPEITLPDGSKKVFEKPVTIQEIAQSIGSGLAKATIAGKVNDVLFDATLPIDNDSKVVIITSRDKDGIEIIRHSFAHLIGHAVKQLYPNIKMAIGPVIDNGFYYDIFSEYRFTPEDLIKIENRINNLIKKNYDVEILQVTKKEAIKTFQERDETFKLRIIEEIPDEGLINLYKHEEYIDMCRGPHVPNTCHLRHFKLLKLSGSYWRGNSENESLQRIYGTAWAKEKELNDYLKRIEEAEKRDHRKLGKKHSLFHIQEESPGMIFWHPNGWTIYQVLEKYVREILNKNDYLEIKTPQAVDKSLWEKSGHWDKFREDMFTTASENRTYAIKPMNCPCHIQVFNQGLKSYKDLPIRLAEFGSCHRNEPSGALHGLMRVRNFTQDDAHIFCTEEQIQAEVSTFIDLVFEVYKTFGFDEIIIKLSTRPEKRVGSENIWDKSEEALMKALDNKSLKWVLQPGEGAFYGPKIEFSLKDCLDRVWQCGTIQVDFSMPIRLDATYIDLNNEKRNPVMLHRAILGSFERFIGILIEQYEAKFPIWLAPYQIILLSITDRNIEKCLKFNQLINSKGYRSKVDIRNEKIGYKIREATIGRIPLIAVIGDKEEQFDSVALRALDGKNLGIFKLDDLYKLMNNLIEKKGRTE</sequence>
<reference key="1">
    <citation type="journal article" date="2003" name="Nature">
        <title>Genome divergence in two Prochlorococcus ecotypes reflects oceanic niche differentiation.</title>
        <authorList>
            <person name="Rocap G."/>
            <person name="Larimer F.W."/>
            <person name="Lamerdin J.E."/>
            <person name="Malfatti S."/>
            <person name="Chain P."/>
            <person name="Ahlgren N.A."/>
            <person name="Arellano A."/>
            <person name="Coleman M."/>
            <person name="Hauser L."/>
            <person name="Hess W.R."/>
            <person name="Johnson Z.I."/>
            <person name="Land M.L."/>
            <person name="Lindell D."/>
            <person name="Post A.F."/>
            <person name="Regala W."/>
            <person name="Shah M."/>
            <person name="Shaw S.L."/>
            <person name="Steglich C."/>
            <person name="Sullivan M.B."/>
            <person name="Ting C.S."/>
            <person name="Tolonen A."/>
            <person name="Webb E.A."/>
            <person name="Zinser E.R."/>
            <person name="Chisholm S.W."/>
        </authorList>
    </citation>
    <scope>NUCLEOTIDE SEQUENCE [LARGE SCALE GENOMIC DNA]</scope>
    <source>
        <strain>CCMP1986 / NIES-2087 / MED4</strain>
    </source>
</reference>
<proteinExistence type="inferred from homology"/>
<comment type="function">
    <text evidence="1">Catalyzes the attachment of threonine to tRNA(Thr) in a two-step reaction: L-threonine is first activated by ATP to form Thr-AMP and then transferred to the acceptor end of tRNA(Thr). Also edits incorrectly charged L-seryl-tRNA(Thr).</text>
</comment>
<comment type="catalytic activity">
    <reaction evidence="1">
        <text>tRNA(Thr) + L-threonine + ATP = L-threonyl-tRNA(Thr) + AMP + diphosphate + H(+)</text>
        <dbReference type="Rhea" id="RHEA:24624"/>
        <dbReference type="Rhea" id="RHEA-COMP:9670"/>
        <dbReference type="Rhea" id="RHEA-COMP:9704"/>
        <dbReference type="ChEBI" id="CHEBI:15378"/>
        <dbReference type="ChEBI" id="CHEBI:30616"/>
        <dbReference type="ChEBI" id="CHEBI:33019"/>
        <dbReference type="ChEBI" id="CHEBI:57926"/>
        <dbReference type="ChEBI" id="CHEBI:78442"/>
        <dbReference type="ChEBI" id="CHEBI:78534"/>
        <dbReference type="ChEBI" id="CHEBI:456215"/>
        <dbReference type="EC" id="6.1.1.3"/>
    </reaction>
</comment>
<comment type="cofactor">
    <cofactor evidence="1">
        <name>Zn(2+)</name>
        <dbReference type="ChEBI" id="CHEBI:29105"/>
    </cofactor>
    <text evidence="1">Binds 1 zinc ion per subunit.</text>
</comment>
<comment type="subunit">
    <text evidence="1">Homodimer.</text>
</comment>
<comment type="subcellular location">
    <subcellularLocation>
        <location evidence="1">Cytoplasm</location>
    </subcellularLocation>
</comment>
<comment type="similarity">
    <text evidence="1">Belongs to the class-II aminoacyl-tRNA synthetase family.</text>
</comment>
<dbReference type="EC" id="6.1.1.3" evidence="1"/>
<dbReference type="EMBL" id="BX548174">
    <property type="protein sequence ID" value="CAE19056.1"/>
    <property type="molecule type" value="Genomic_DNA"/>
</dbReference>
<dbReference type="RefSeq" id="WP_011132231.1">
    <property type="nucleotide sequence ID" value="NC_005072.1"/>
</dbReference>
<dbReference type="SMR" id="Q7V287"/>
<dbReference type="STRING" id="59919.PMM0597"/>
<dbReference type="KEGG" id="pmm:PMM0597"/>
<dbReference type="eggNOG" id="COG0441">
    <property type="taxonomic scope" value="Bacteria"/>
</dbReference>
<dbReference type="HOGENOM" id="CLU_008554_0_1_3"/>
<dbReference type="OrthoDB" id="9802304at2"/>
<dbReference type="Proteomes" id="UP000001026">
    <property type="component" value="Chromosome"/>
</dbReference>
<dbReference type="GO" id="GO:0005829">
    <property type="term" value="C:cytosol"/>
    <property type="evidence" value="ECO:0007669"/>
    <property type="project" value="TreeGrafter"/>
</dbReference>
<dbReference type="GO" id="GO:0005524">
    <property type="term" value="F:ATP binding"/>
    <property type="evidence" value="ECO:0007669"/>
    <property type="project" value="UniProtKB-UniRule"/>
</dbReference>
<dbReference type="GO" id="GO:0046872">
    <property type="term" value="F:metal ion binding"/>
    <property type="evidence" value="ECO:0007669"/>
    <property type="project" value="UniProtKB-KW"/>
</dbReference>
<dbReference type="GO" id="GO:0004829">
    <property type="term" value="F:threonine-tRNA ligase activity"/>
    <property type="evidence" value="ECO:0007669"/>
    <property type="project" value="UniProtKB-UniRule"/>
</dbReference>
<dbReference type="GO" id="GO:0000049">
    <property type="term" value="F:tRNA binding"/>
    <property type="evidence" value="ECO:0007669"/>
    <property type="project" value="UniProtKB-KW"/>
</dbReference>
<dbReference type="GO" id="GO:0006435">
    <property type="term" value="P:threonyl-tRNA aminoacylation"/>
    <property type="evidence" value="ECO:0007669"/>
    <property type="project" value="UniProtKB-UniRule"/>
</dbReference>
<dbReference type="CDD" id="cd01667">
    <property type="entry name" value="TGS_ThrRS"/>
    <property type="match status" value="1"/>
</dbReference>
<dbReference type="CDD" id="cd00771">
    <property type="entry name" value="ThrRS_core"/>
    <property type="match status" value="1"/>
</dbReference>
<dbReference type="FunFam" id="3.10.20.30:FF:000005">
    <property type="entry name" value="Threonine--tRNA ligase"/>
    <property type="match status" value="1"/>
</dbReference>
<dbReference type="FunFam" id="3.30.54.20:FF:000002">
    <property type="entry name" value="Threonine--tRNA ligase"/>
    <property type="match status" value="1"/>
</dbReference>
<dbReference type="FunFam" id="3.30.930.10:FF:000002">
    <property type="entry name" value="Threonine--tRNA ligase"/>
    <property type="match status" value="1"/>
</dbReference>
<dbReference type="FunFam" id="3.30.980.10:FF:000005">
    <property type="entry name" value="Threonyl-tRNA synthetase, mitochondrial"/>
    <property type="match status" value="1"/>
</dbReference>
<dbReference type="Gene3D" id="3.10.20.30">
    <property type="match status" value="1"/>
</dbReference>
<dbReference type="Gene3D" id="3.30.54.20">
    <property type="match status" value="1"/>
</dbReference>
<dbReference type="Gene3D" id="3.40.50.800">
    <property type="entry name" value="Anticodon-binding domain"/>
    <property type="match status" value="1"/>
</dbReference>
<dbReference type="Gene3D" id="3.30.930.10">
    <property type="entry name" value="Bira Bifunctional Protein, Domain 2"/>
    <property type="match status" value="1"/>
</dbReference>
<dbReference type="Gene3D" id="3.30.980.10">
    <property type="entry name" value="Threonyl-trna Synthetase, Chain A, domain 2"/>
    <property type="match status" value="1"/>
</dbReference>
<dbReference type="HAMAP" id="MF_00184">
    <property type="entry name" value="Thr_tRNA_synth"/>
    <property type="match status" value="1"/>
</dbReference>
<dbReference type="InterPro" id="IPR002314">
    <property type="entry name" value="aa-tRNA-synt_IIb"/>
</dbReference>
<dbReference type="InterPro" id="IPR006195">
    <property type="entry name" value="aa-tRNA-synth_II"/>
</dbReference>
<dbReference type="InterPro" id="IPR045864">
    <property type="entry name" value="aa-tRNA-synth_II/BPL/LPL"/>
</dbReference>
<dbReference type="InterPro" id="IPR004154">
    <property type="entry name" value="Anticodon-bd"/>
</dbReference>
<dbReference type="InterPro" id="IPR036621">
    <property type="entry name" value="Anticodon-bd_dom_sf"/>
</dbReference>
<dbReference type="InterPro" id="IPR012675">
    <property type="entry name" value="Beta-grasp_dom_sf"/>
</dbReference>
<dbReference type="InterPro" id="IPR004095">
    <property type="entry name" value="TGS"/>
</dbReference>
<dbReference type="InterPro" id="IPR012676">
    <property type="entry name" value="TGS-like"/>
</dbReference>
<dbReference type="InterPro" id="IPR002320">
    <property type="entry name" value="Thr-tRNA-ligase_IIa"/>
</dbReference>
<dbReference type="InterPro" id="IPR018163">
    <property type="entry name" value="Thr/Ala-tRNA-synth_IIc_edit"/>
</dbReference>
<dbReference type="InterPro" id="IPR033728">
    <property type="entry name" value="ThrRS_core"/>
</dbReference>
<dbReference type="InterPro" id="IPR012947">
    <property type="entry name" value="tRNA_SAD"/>
</dbReference>
<dbReference type="NCBIfam" id="TIGR00418">
    <property type="entry name" value="thrS"/>
    <property type="match status" value="1"/>
</dbReference>
<dbReference type="PANTHER" id="PTHR11451:SF44">
    <property type="entry name" value="THREONINE--TRNA LIGASE, CHLOROPLASTIC_MITOCHONDRIAL 2"/>
    <property type="match status" value="1"/>
</dbReference>
<dbReference type="PANTHER" id="PTHR11451">
    <property type="entry name" value="THREONINE-TRNA LIGASE"/>
    <property type="match status" value="1"/>
</dbReference>
<dbReference type="Pfam" id="PF03129">
    <property type="entry name" value="HGTP_anticodon"/>
    <property type="match status" value="1"/>
</dbReference>
<dbReference type="Pfam" id="PF02824">
    <property type="entry name" value="TGS"/>
    <property type="match status" value="1"/>
</dbReference>
<dbReference type="Pfam" id="PF00587">
    <property type="entry name" value="tRNA-synt_2b"/>
    <property type="match status" value="1"/>
</dbReference>
<dbReference type="Pfam" id="PF07973">
    <property type="entry name" value="tRNA_SAD"/>
    <property type="match status" value="1"/>
</dbReference>
<dbReference type="PRINTS" id="PR01047">
    <property type="entry name" value="TRNASYNTHTHR"/>
</dbReference>
<dbReference type="SMART" id="SM00863">
    <property type="entry name" value="tRNA_SAD"/>
    <property type="match status" value="1"/>
</dbReference>
<dbReference type="SUPFAM" id="SSF52954">
    <property type="entry name" value="Class II aaRS ABD-related"/>
    <property type="match status" value="1"/>
</dbReference>
<dbReference type="SUPFAM" id="SSF55681">
    <property type="entry name" value="Class II aaRS and biotin synthetases"/>
    <property type="match status" value="1"/>
</dbReference>
<dbReference type="SUPFAM" id="SSF81271">
    <property type="entry name" value="TGS-like"/>
    <property type="match status" value="1"/>
</dbReference>
<dbReference type="SUPFAM" id="SSF55186">
    <property type="entry name" value="ThrRS/AlaRS common domain"/>
    <property type="match status" value="1"/>
</dbReference>
<dbReference type="PROSITE" id="PS50862">
    <property type="entry name" value="AA_TRNA_LIGASE_II"/>
    <property type="match status" value="1"/>
</dbReference>
<dbReference type="PROSITE" id="PS51880">
    <property type="entry name" value="TGS"/>
    <property type="match status" value="1"/>
</dbReference>
<accession>Q7V287</accession>